<sequence length="179" mass="19786">MSSLSCGTAVCVVCLEKPKYRCPACRVPYCSLPCFRKHKAPPLQQLPVCPLRLGACCCFIEQCRPAAGPVEKKIRSALTAKTKKPVENEGSLDDDDSVADFLNSDEEEDRVSLQNLKNLGESAALRSLLLNPHLRQLMVDLDQADDKAKLMRACMQEPLFVEFADCCLSIVEPSQNEDP</sequence>
<proteinExistence type="evidence at transcript level"/>
<feature type="chain" id="PRO_0000282717" description="Zinc finger HIT domain-containing protein 3">
    <location>
        <begin position="1"/>
        <end position="179"/>
    </location>
</feature>
<feature type="zinc finger region" description="HIT-type" evidence="2">
    <location>
        <begin position="11"/>
        <end position="49"/>
    </location>
</feature>
<feature type="binding site" evidence="2">
    <location>
        <position position="11"/>
    </location>
    <ligand>
        <name>Zn(2+)</name>
        <dbReference type="ChEBI" id="CHEBI:29105"/>
        <label>1</label>
    </ligand>
</feature>
<feature type="binding site" evidence="2">
    <location>
        <position position="14"/>
    </location>
    <ligand>
        <name>Zn(2+)</name>
        <dbReference type="ChEBI" id="CHEBI:29105"/>
        <label>1</label>
    </ligand>
</feature>
<feature type="binding site" evidence="2">
    <location>
        <position position="22"/>
    </location>
    <ligand>
        <name>Zn(2+)</name>
        <dbReference type="ChEBI" id="CHEBI:29105"/>
        <label>2</label>
    </ligand>
</feature>
<feature type="binding site" evidence="2">
    <location>
        <position position="25"/>
    </location>
    <ligand>
        <name>Zn(2+)</name>
        <dbReference type="ChEBI" id="CHEBI:29105"/>
        <label>2</label>
    </ligand>
</feature>
<feature type="binding site" evidence="2">
    <location>
        <position position="30"/>
    </location>
    <ligand>
        <name>Zn(2+)</name>
        <dbReference type="ChEBI" id="CHEBI:29105"/>
        <label>1</label>
    </ligand>
</feature>
<feature type="binding site" evidence="2">
    <location>
        <position position="34"/>
    </location>
    <ligand>
        <name>Zn(2+)</name>
        <dbReference type="ChEBI" id="CHEBI:29105"/>
        <label>1</label>
    </ligand>
</feature>
<feature type="binding site" evidence="2">
    <location>
        <position position="38"/>
    </location>
    <ligand>
        <name>Zn(2+)</name>
        <dbReference type="ChEBI" id="CHEBI:29105"/>
        <label>2</label>
    </ligand>
</feature>
<feature type="binding site" evidence="2">
    <location>
        <position position="49"/>
    </location>
    <ligand>
        <name>Zn(2+)</name>
        <dbReference type="ChEBI" id="CHEBI:29105"/>
        <label>2</label>
    </ligand>
</feature>
<feature type="modified residue" description="Phosphoserine" evidence="1">
    <location>
        <position position="104"/>
    </location>
</feature>
<evidence type="ECO:0000250" key="1">
    <source>
        <dbReference type="UniProtKB" id="Q15649"/>
    </source>
</evidence>
<evidence type="ECO:0000255" key="2">
    <source>
        <dbReference type="PROSITE-ProRule" id="PRU00453"/>
    </source>
</evidence>
<keyword id="KW-0963">Cytoplasm</keyword>
<keyword id="KW-0479">Metal-binding</keyword>
<keyword id="KW-0539">Nucleus</keyword>
<keyword id="KW-0597">Phosphoprotein</keyword>
<keyword id="KW-1185">Reference proteome</keyword>
<keyword id="KW-0862">Zinc</keyword>
<keyword id="KW-0863">Zinc-finger</keyword>
<name>ZNHI3_BOVIN</name>
<organism>
    <name type="scientific">Bos taurus</name>
    <name type="common">Bovine</name>
    <dbReference type="NCBI Taxonomy" id="9913"/>
    <lineage>
        <taxon>Eukaryota</taxon>
        <taxon>Metazoa</taxon>
        <taxon>Chordata</taxon>
        <taxon>Craniata</taxon>
        <taxon>Vertebrata</taxon>
        <taxon>Euteleostomi</taxon>
        <taxon>Mammalia</taxon>
        <taxon>Eutheria</taxon>
        <taxon>Laurasiatheria</taxon>
        <taxon>Artiodactyla</taxon>
        <taxon>Ruminantia</taxon>
        <taxon>Pecora</taxon>
        <taxon>Bovidae</taxon>
        <taxon>Bovinae</taxon>
        <taxon>Bos</taxon>
    </lineage>
</organism>
<dbReference type="EMBL" id="BC112640">
    <property type="protein sequence ID" value="AAI12641.1"/>
    <property type="molecule type" value="mRNA"/>
</dbReference>
<dbReference type="RefSeq" id="NP_001039360.1">
    <property type="nucleotide sequence ID" value="NM_001045895.1"/>
</dbReference>
<dbReference type="RefSeq" id="XP_015314020.1">
    <property type="nucleotide sequence ID" value="XM_015458534.1"/>
</dbReference>
<dbReference type="SMR" id="Q2KIH1"/>
<dbReference type="FunCoup" id="Q2KIH1">
    <property type="interactions" value="2894"/>
</dbReference>
<dbReference type="STRING" id="9913.ENSBTAP00000045729"/>
<dbReference type="PaxDb" id="9913-ENSBTAP00000045729"/>
<dbReference type="Ensembl" id="ENSBTAT00000048740.4">
    <property type="protein sequence ID" value="ENSBTAP00000045729.2"/>
    <property type="gene ID" value="ENSBTAG00000012672.7"/>
</dbReference>
<dbReference type="GeneID" id="504662"/>
<dbReference type="KEGG" id="bta:504662"/>
<dbReference type="CTD" id="9326"/>
<dbReference type="VEuPathDB" id="HostDB:ENSBTAG00000012672"/>
<dbReference type="VGNC" id="VGNC:37360">
    <property type="gene designation" value="ZNHIT3"/>
</dbReference>
<dbReference type="eggNOG" id="KOG2857">
    <property type="taxonomic scope" value="Eukaryota"/>
</dbReference>
<dbReference type="GeneTree" id="ENSGT00390000010822"/>
<dbReference type="HOGENOM" id="CLU_117355_1_0_1"/>
<dbReference type="InParanoid" id="Q2KIH1"/>
<dbReference type="OMA" id="CNEAQSK"/>
<dbReference type="OrthoDB" id="18412at2759"/>
<dbReference type="TreeFam" id="TF324673"/>
<dbReference type="Proteomes" id="UP000009136">
    <property type="component" value="Chromosome 19"/>
</dbReference>
<dbReference type="Bgee" id="ENSBTAG00000012672">
    <property type="expression patterns" value="Expressed in oocyte and 104 other cell types or tissues"/>
</dbReference>
<dbReference type="GO" id="GO:0005737">
    <property type="term" value="C:cytoplasm"/>
    <property type="evidence" value="ECO:0000250"/>
    <property type="project" value="UniProtKB"/>
</dbReference>
<dbReference type="GO" id="GO:0005634">
    <property type="term" value="C:nucleus"/>
    <property type="evidence" value="ECO:0000250"/>
    <property type="project" value="UniProtKB"/>
</dbReference>
<dbReference type="GO" id="GO:0070761">
    <property type="term" value="C:pre-snoRNP complex"/>
    <property type="evidence" value="ECO:0000318"/>
    <property type="project" value="GO_Central"/>
</dbReference>
<dbReference type="GO" id="GO:0008270">
    <property type="term" value="F:zinc ion binding"/>
    <property type="evidence" value="ECO:0007669"/>
    <property type="project" value="UniProtKB-KW"/>
</dbReference>
<dbReference type="GO" id="GO:0000492">
    <property type="term" value="P:box C/D snoRNP assembly"/>
    <property type="evidence" value="ECO:0000318"/>
    <property type="project" value="GO_Central"/>
</dbReference>
<dbReference type="GO" id="GO:0000463">
    <property type="term" value="P:maturation of LSU-rRNA from tricistronic rRNA transcript (SSU-rRNA, 5.8S rRNA, LSU-rRNA)"/>
    <property type="evidence" value="ECO:0000318"/>
    <property type="project" value="GO_Central"/>
</dbReference>
<dbReference type="GO" id="GO:0048254">
    <property type="term" value="P:snoRNA localization"/>
    <property type="evidence" value="ECO:0000318"/>
    <property type="project" value="GO_Central"/>
</dbReference>
<dbReference type="CDD" id="cd23024">
    <property type="entry name" value="zf-HIT_ZNHIT2-3"/>
    <property type="match status" value="1"/>
</dbReference>
<dbReference type="FunFam" id="3.30.60.190:FF:000002">
    <property type="entry name" value="Zinc finger HIT domain-containing protein 3"/>
    <property type="match status" value="1"/>
</dbReference>
<dbReference type="Gene3D" id="3.30.60.190">
    <property type="match status" value="1"/>
</dbReference>
<dbReference type="InterPro" id="IPR051639">
    <property type="entry name" value="BCD1"/>
</dbReference>
<dbReference type="InterPro" id="IPR007529">
    <property type="entry name" value="Znf_HIT"/>
</dbReference>
<dbReference type="InterPro" id="IPR048371">
    <property type="entry name" value="ZNHIT3_C"/>
</dbReference>
<dbReference type="PANTHER" id="PTHR13483">
    <property type="entry name" value="BOX C_D SNORNA PROTEIN 1-RELATED"/>
    <property type="match status" value="1"/>
</dbReference>
<dbReference type="PANTHER" id="PTHR13483:SF11">
    <property type="entry name" value="ZINC FINGER HIT DOMAIN-CONTAINING PROTEIN 3"/>
    <property type="match status" value="1"/>
</dbReference>
<dbReference type="Pfam" id="PF04438">
    <property type="entry name" value="zf-HIT"/>
    <property type="match status" value="1"/>
</dbReference>
<dbReference type="Pfam" id="PF21373">
    <property type="entry name" value="ZNHIT3_C"/>
    <property type="match status" value="1"/>
</dbReference>
<dbReference type="SUPFAM" id="SSF144232">
    <property type="entry name" value="HIT/MYND zinc finger-like"/>
    <property type="match status" value="1"/>
</dbReference>
<dbReference type="PROSITE" id="PS51083">
    <property type="entry name" value="ZF_HIT"/>
    <property type="match status" value="1"/>
</dbReference>
<accession>Q2KIH1</accession>
<gene>
    <name type="primary">ZNHIT3</name>
</gene>
<reference key="1">
    <citation type="submission" date="2006-01" db="EMBL/GenBank/DDBJ databases">
        <authorList>
            <consortium name="NIH - Mammalian Gene Collection (MGC) project"/>
        </authorList>
    </citation>
    <scope>NUCLEOTIDE SEQUENCE [LARGE SCALE MRNA]</scope>
    <source>
        <strain>Hereford</strain>
        <tissue>Testis</tissue>
    </source>
</reference>
<protein>
    <recommendedName>
        <fullName>Zinc finger HIT domain-containing protein 3</fullName>
    </recommendedName>
</protein>
<comment type="subunit">
    <text evidence="1">Thyroid receptor interacting proteins (TRIPs) specifically interact with the ligand binding domain of the thyroid receptor (TR) (By similarity). Requires the presence of thyroid hormone for its interaction (By similarity). Interacts with NUFIP1 (By similarity). Interacts (via HIT-type zinc finger) with the RUVBL1/RUVBL2 complex in the presence of ADP (By similarity).</text>
</comment>
<comment type="subcellular location">
    <subcellularLocation>
        <location evidence="1">Cytoplasm</location>
    </subcellularLocation>
    <subcellularLocation>
        <location evidence="1">Nucleus</location>
    </subcellularLocation>
</comment>